<dbReference type="EMBL" id="AP008231">
    <property type="protein sequence ID" value="BAD78464.1"/>
    <property type="molecule type" value="Genomic_DNA"/>
</dbReference>
<dbReference type="RefSeq" id="WP_011242588.1">
    <property type="nucleotide sequence ID" value="NZ_CP085785.1"/>
</dbReference>
<dbReference type="SMR" id="Q5N5F4"/>
<dbReference type="GeneID" id="72430139"/>
<dbReference type="KEGG" id="syc:syc0274_d"/>
<dbReference type="eggNOG" id="COG0291">
    <property type="taxonomic scope" value="Bacteria"/>
</dbReference>
<dbReference type="Proteomes" id="UP000001175">
    <property type="component" value="Chromosome"/>
</dbReference>
<dbReference type="GO" id="GO:0022625">
    <property type="term" value="C:cytosolic large ribosomal subunit"/>
    <property type="evidence" value="ECO:0007669"/>
    <property type="project" value="TreeGrafter"/>
</dbReference>
<dbReference type="GO" id="GO:0003735">
    <property type="term" value="F:structural constituent of ribosome"/>
    <property type="evidence" value="ECO:0007669"/>
    <property type="project" value="InterPro"/>
</dbReference>
<dbReference type="GO" id="GO:0006412">
    <property type="term" value="P:translation"/>
    <property type="evidence" value="ECO:0007669"/>
    <property type="project" value="UniProtKB-UniRule"/>
</dbReference>
<dbReference type="FunFam" id="4.10.410.60:FF:000001">
    <property type="entry name" value="50S ribosomal protein L35"/>
    <property type="match status" value="1"/>
</dbReference>
<dbReference type="Gene3D" id="4.10.410.60">
    <property type="match status" value="1"/>
</dbReference>
<dbReference type="HAMAP" id="MF_00514">
    <property type="entry name" value="Ribosomal_bL35"/>
    <property type="match status" value="1"/>
</dbReference>
<dbReference type="InterPro" id="IPR001706">
    <property type="entry name" value="Ribosomal_bL35"/>
</dbReference>
<dbReference type="InterPro" id="IPR021137">
    <property type="entry name" value="Ribosomal_bL35-like"/>
</dbReference>
<dbReference type="InterPro" id="IPR018265">
    <property type="entry name" value="Ribosomal_bL35_CS"/>
</dbReference>
<dbReference type="InterPro" id="IPR037229">
    <property type="entry name" value="Ribosomal_bL35_sf"/>
</dbReference>
<dbReference type="NCBIfam" id="TIGR00001">
    <property type="entry name" value="rpmI_bact"/>
    <property type="match status" value="1"/>
</dbReference>
<dbReference type="PANTHER" id="PTHR33343">
    <property type="entry name" value="54S RIBOSOMAL PROTEIN BL35M"/>
    <property type="match status" value="1"/>
</dbReference>
<dbReference type="PANTHER" id="PTHR33343:SF1">
    <property type="entry name" value="LARGE RIBOSOMAL SUBUNIT PROTEIN BL35M"/>
    <property type="match status" value="1"/>
</dbReference>
<dbReference type="Pfam" id="PF01632">
    <property type="entry name" value="Ribosomal_L35p"/>
    <property type="match status" value="1"/>
</dbReference>
<dbReference type="PRINTS" id="PR00064">
    <property type="entry name" value="RIBOSOMALL35"/>
</dbReference>
<dbReference type="SUPFAM" id="SSF143034">
    <property type="entry name" value="L35p-like"/>
    <property type="match status" value="1"/>
</dbReference>
<dbReference type="PROSITE" id="PS00936">
    <property type="entry name" value="RIBOSOMAL_L35"/>
    <property type="match status" value="1"/>
</dbReference>
<gene>
    <name evidence="1" type="primary">rpmI</name>
    <name evidence="1" type="synonym">rpl35</name>
    <name type="ordered locus">syc0274_d</name>
</gene>
<sequence>MPKLKTRKAAAKRFRISGNGKAIRRKAFKNHLLQHKNATRRRRLSQPEVVHETDQERVKLMLPYSF</sequence>
<reference key="1">
    <citation type="journal article" date="2007" name="Photosyn. Res.">
        <title>Complete nucleotide sequence of the freshwater unicellular cyanobacterium Synechococcus elongatus PCC 6301 chromosome: gene content and organization.</title>
        <authorList>
            <person name="Sugita C."/>
            <person name="Ogata K."/>
            <person name="Shikata M."/>
            <person name="Jikuya H."/>
            <person name="Takano J."/>
            <person name="Furumichi M."/>
            <person name="Kanehisa M."/>
            <person name="Omata T."/>
            <person name="Sugiura M."/>
            <person name="Sugita M."/>
        </authorList>
    </citation>
    <scope>NUCLEOTIDE SEQUENCE [LARGE SCALE GENOMIC DNA]</scope>
    <source>
        <strain>ATCC 27144 / PCC 6301 / SAUG 1402/1</strain>
    </source>
</reference>
<organism>
    <name type="scientific">Synechococcus sp. (strain ATCC 27144 / PCC 6301 / SAUG 1402/1)</name>
    <name type="common">Anacystis nidulans</name>
    <dbReference type="NCBI Taxonomy" id="269084"/>
    <lineage>
        <taxon>Bacteria</taxon>
        <taxon>Bacillati</taxon>
        <taxon>Cyanobacteriota</taxon>
        <taxon>Cyanophyceae</taxon>
        <taxon>Synechococcales</taxon>
        <taxon>Synechococcaceae</taxon>
        <taxon>Synechococcus</taxon>
    </lineage>
</organism>
<evidence type="ECO:0000255" key="1">
    <source>
        <dbReference type="HAMAP-Rule" id="MF_00514"/>
    </source>
</evidence>
<evidence type="ECO:0000305" key="2"/>
<accession>Q5N5F4</accession>
<comment type="similarity">
    <text evidence="1">Belongs to the bacterial ribosomal protein bL35 family.</text>
</comment>
<protein>
    <recommendedName>
        <fullName evidence="1">Large ribosomal subunit protein bL35</fullName>
    </recommendedName>
    <alternativeName>
        <fullName evidence="2">50S ribosomal protein L35</fullName>
    </alternativeName>
</protein>
<keyword id="KW-0687">Ribonucleoprotein</keyword>
<keyword id="KW-0689">Ribosomal protein</keyword>
<name>RL35_SYNP6</name>
<proteinExistence type="inferred from homology"/>
<feature type="chain" id="PRO_0000258770" description="Large ribosomal subunit protein bL35">
    <location>
        <begin position="1"/>
        <end position="66"/>
    </location>
</feature>